<comment type="similarity">
    <text evidence="1">Belongs to the DNA glycosylase MPG family.</text>
</comment>
<protein>
    <recommendedName>
        <fullName evidence="1">Putative 3-methyladenine DNA glycosylase</fullName>
        <ecNumber evidence="1">3.2.2.-</ecNumber>
    </recommendedName>
</protein>
<reference key="1">
    <citation type="journal article" date="2008" name="J. Biotechnol.">
        <title>The genome of Xanthomonas campestris pv. campestris B100 and its use for the reconstruction of metabolic pathways involved in xanthan biosynthesis.</title>
        <authorList>
            <person name="Vorhoelter F.-J."/>
            <person name="Schneiker S."/>
            <person name="Goesmann A."/>
            <person name="Krause L."/>
            <person name="Bekel T."/>
            <person name="Kaiser O."/>
            <person name="Linke B."/>
            <person name="Patschkowski T."/>
            <person name="Rueckert C."/>
            <person name="Schmid J."/>
            <person name="Sidhu V.K."/>
            <person name="Sieber V."/>
            <person name="Tauch A."/>
            <person name="Watt S.A."/>
            <person name="Weisshaar B."/>
            <person name="Becker A."/>
            <person name="Niehaus K."/>
            <person name="Puehler A."/>
        </authorList>
    </citation>
    <scope>NUCLEOTIDE SEQUENCE [LARGE SCALE GENOMIC DNA]</scope>
    <source>
        <strain>B100</strain>
    </source>
</reference>
<gene>
    <name type="ordered locus">xcc-b100_1856</name>
</gene>
<evidence type="ECO:0000255" key="1">
    <source>
        <dbReference type="HAMAP-Rule" id="MF_00527"/>
    </source>
</evidence>
<organism>
    <name type="scientific">Xanthomonas campestris pv. campestris (strain B100)</name>
    <dbReference type="NCBI Taxonomy" id="509169"/>
    <lineage>
        <taxon>Bacteria</taxon>
        <taxon>Pseudomonadati</taxon>
        <taxon>Pseudomonadota</taxon>
        <taxon>Gammaproteobacteria</taxon>
        <taxon>Lysobacterales</taxon>
        <taxon>Lysobacteraceae</taxon>
        <taxon>Xanthomonas</taxon>
    </lineage>
</organism>
<proteinExistence type="inferred from homology"/>
<accession>B0RRX4</accession>
<feature type="chain" id="PRO_1000127765" description="Putative 3-methyladenine DNA glycosylase">
    <location>
        <begin position="1"/>
        <end position="207"/>
    </location>
</feature>
<keyword id="KW-0227">DNA damage</keyword>
<keyword id="KW-0234">DNA repair</keyword>
<keyword id="KW-0378">Hydrolase</keyword>
<sequence length="207" mass="21765">MSLHSPLPRAFYAADARTVAPLLLNKVLVSADGRRGRITEVEAYCGSEDAAAHSFRGMTPRTQVMFGAPGHLYVYFIYGMHWAINAVCGGAPGHAVLIRALEPLAGCDAMHAARGAAPFKSLTTGPGRLAQAFGVSAVDNGLDLTTGVARLWIEDDGTPPPAAPLAGPRIGIRKAVELPWRWVVPGSAYLSRPLPRVSGARASVTGD</sequence>
<name>3MGH_XANCB</name>
<dbReference type="EC" id="3.2.2.-" evidence="1"/>
<dbReference type="EMBL" id="AM920689">
    <property type="protein sequence ID" value="CAP51209.1"/>
    <property type="molecule type" value="Genomic_DNA"/>
</dbReference>
<dbReference type="SMR" id="B0RRX4"/>
<dbReference type="KEGG" id="xca:xcc-b100_1856"/>
<dbReference type="HOGENOM" id="CLU_060471_3_2_6"/>
<dbReference type="Proteomes" id="UP000001188">
    <property type="component" value="Chromosome"/>
</dbReference>
<dbReference type="GO" id="GO:0003905">
    <property type="term" value="F:alkylbase DNA N-glycosylase activity"/>
    <property type="evidence" value="ECO:0007669"/>
    <property type="project" value="InterPro"/>
</dbReference>
<dbReference type="GO" id="GO:0003677">
    <property type="term" value="F:DNA binding"/>
    <property type="evidence" value="ECO:0007669"/>
    <property type="project" value="InterPro"/>
</dbReference>
<dbReference type="GO" id="GO:0006284">
    <property type="term" value="P:base-excision repair"/>
    <property type="evidence" value="ECO:0007669"/>
    <property type="project" value="InterPro"/>
</dbReference>
<dbReference type="CDD" id="cd00540">
    <property type="entry name" value="AAG"/>
    <property type="match status" value="1"/>
</dbReference>
<dbReference type="FunFam" id="3.10.300.10:FF:000001">
    <property type="entry name" value="Putative 3-methyladenine DNA glycosylase"/>
    <property type="match status" value="1"/>
</dbReference>
<dbReference type="Gene3D" id="3.10.300.10">
    <property type="entry name" value="Methylpurine-DNA glycosylase (MPG)"/>
    <property type="match status" value="1"/>
</dbReference>
<dbReference type="HAMAP" id="MF_00527">
    <property type="entry name" value="3MGH"/>
    <property type="match status" value="1"/>
</dbReference>
<dbReference type="InterPro" id="IPR011034">
    <property type="entry name" value="Formyl_transferase-like_C_sf"/>
</dbReference>
<dbReference type="InterPro" id="IPR003180">
    <property type="entry name" value="MPG"/>
</dbReference>
<dbReference type="InterPro" id="IPR036995">
    <property type="entry name" value="MPG_sf"/>
</dbReference>
<dbReference type="NCBIfam" id="TIGR00567">
    <property type="entry name" value="3mg"/>
    <property type="match status" value="1"/>
</dbReference>
<dbReference type="NCBIfam" id="NF002003">
    <property type="entry name" value="PRK00802.1-3"/>
    <property type="match status" value="1"/>
</dbReference>
<dbReference type="PANTHER" id="PTHR10429">
    <property type="entry name" value="DNA-3-METHYLADENINE GLYCOSYLASE"/>
    <property type="match status" value="1"/>
</dbReference>
<dbReference type="PANTHER" id="PTHR10429:SF0">
    <property type="entry name" value="DNA-3-METHYLADENINE GLYCOSYLASE"/>
    <property type="match status" value="1"/>
</dbReference>
<dbReference type="Pfam" id="PF02245">
    <property type="entry name" value="Pur_DNA_glyco"/>
    <property type="match status" value="1"/>
</dbReference>
<dbReference type="SUPFAM" id="SSF50486">
    <property type="entry name" value="FMT C-terminal domain-like"/>
    <property type="match status" value="1"/>
</dbReference>